<dbReference type="EMBL" id="U00089">
    <property type="protein sequence ID" value="AAB96188.1"/>
    <property type="molecule type" value="Genomic_DNA"/>
</dbReference>
<dbReference type="PIR" id="S73866">
    <property type="entry name" value="S73866"/>
</dbReference>
<dbReference type="RefSeq" id="NP_109983.1">
    <property type="nucleotide sequence ID" value="NC_000912.1"/>
</dbReference>
<dbReference type="RefSeq" id="WP_010874652.1">
    <property type="nucleotide sequence ID" value="NZ_OU342337.1"/>
</dbReference>
<dbReference type="IntAct" id="P75482">
    <property type="interactions" value="1"/>
</dbReference>
<dbReference type="STRING" id="272634.MPN_295"/>
<dbReference type="EnsemblBacteria" id="AAB96188">
    <property type="protein sequence ID" value="AAB96188"/>
    <property type="gene ID" value="MPN_295"/>
</dbReference>
<dbReference type="KEGG" id="mpn:MPN_295"/>
<dbReference type="PATRIC" id="fig|272634.6.peg.319"/>
<dbReference type="HOGENOM" id="CLU_1260278_0_0_14"/>
<dbReference type="OrthoDB" id="400299at2"/>
<dbReference type="BioCyc" id="MPNE272634:G1GJ3-463-MONOMER"/>
<dbReference type="Proteomes" id="UP000000808">
    <property type="component" value="Chromosome"/>
</dbReference>
<dbReference type="InterPro" id="IPR035215">
    <property type="entry name" value="DUF5454"/>
</dbReference>
<dbReference type="Pfam" id="PF17535">
    <property type="entry name" value="DUF5454"/>
    <property type="match status" value="1"/>
</dbReference>
<keyword id="KW-1185">Reference proteome</keyword>
<sequence>MNNTKNKSDWQLFLEDYRFYHEKEFDWITYLNHCLNSYPDFDILKFIRKYGPECEKSFLSLQSKTKADVYGVFTKQIKAGSVNEVLAQKLVQLDALRTNYLIGALYSTNKTQKKLFKQSWKNAKKQGYTKQEWLMTLVGLPFEKGEYHKQLYAHSRQEILDLVEAVKKLYLRPEKDDKLEFADSSKVSESKSIKVTNAVTLPSDDLDKELFEFSGEGGDE</sequence>
<accession>P75482</accession>
<gene>
    <name type="ordered locus">MPN_295</name>
    <name type="ORF">H10_orf220L</name>
    <name type="ORF">MP540</name>
</gene>
<protein>
    <recommendedName>
        <fullName>Uncharacterized protein MG210.1 homolog</fullName>
    </recommendedName>
</protein>
<feature type="chain" id="PRO_0000210457" description="Uncharacterized protein MG210.1 homolog">
    <location>
        <begin position="1"/>
        <end position="220"/>
    </location>
</feature>
<name>Y295_MYCPN</name>
<proteinExistence type="predicted"/>
<reference key="1">
    <citation type="journal article" date="1996" name="Nucleic Acids Res.">
        <title>Complete sequence analysis of the genome of the bacterium Mycoplasma pneumoniae.</title>
        <authorList>
            <person name="Himmelreich R."/>
            <person name="Hilbert H."/>
            <person name="Plagens H."/>
            <person name="Pirkl E."/>
            <person name="Li B.-C."/>
            <person name="Herrmann R."/>
        </authorList>
    </citation>
    <scope>NUCLEOTIDE SEQUENCE [LARGE SCALE GENOMIC DNA]</scope>
    <source>
        <strain>ATCC 29342 / M129 / Subtype 1</strain>
    </source>
</reference>
<organism>
    <name type="scientific">Mycoplasma pneumoniae (strain ATCC 29342 / M129 / Subtype 1)</name>
    <name type="common">Mycoplasmoides pneumoniae</name>
    <dbReference type="NCBI Taxonomy" id="272634"/>
    <lineage>
        <taxon>Bacteria</taxon>
        <taxon>Bacillati</taxon>
        <taxon>Mycoplasmatota</taxon>
        <taxon>Mycoplasmoidales</taxon>
        <taxon>Mycoplasmoidaceae</taxon>
        <taxon>Mycoplasmoides</taxon>
    </lineage>
</organism>